<organism>
    <name type="scientific">Arabidopsis thaliana</name>
    <name type="common">Mouse-ear cress</name>
    <dbReference type="NCBI Taxonomy" id="3702"/>
    <lineage>
        <taxon>Eukaryota</taxon>
        <taxon>Viridiplantae</taxon>
        <taxon>Streptophyta</taxon>
        <taxon>Embryophyta</taxon>
        <taxon>Tracheophyta</taxon>
        <taxon>Spermatophyta</taxon>
        <taxon>Magnoliopsida</taxon>
        <taxon>eudicotyledons</taxon>
        <taxon>Gunneridae</taxon>
        <taxon>Pentapetalae</taxon>
        <taxon>rosids</taxon>
        <taxon>malvids</taxon>
        <taxon>Brassicales</taxon>
        <taxon>Brassicaceae</taxon>
        <taxon>Camelineae</taxon>
        <taxon>Arabidopsis</taxon>
    </lineage>
</organism>
<comment type="function">
    <text>1-aminocyclopropane-1-carboxylate synthase (ACS) enzymes catalyze the conversion of S-adenosyl-L-methionine (SAM) into 1-aminocyclopropane-1-carboxylate (ACC), a direct precursor of ethylene.</text>
</comment>
<comment type="catalytic activity">
    <reaction evidence="2">
        <text>S-adenosyl-L-methionine = 1-aminocyclopropane-1-carboxylate + S-methyl-5'-thioadenosine + H(+)</text>
        <dbReference type="Rhea" id="RHEA:21744"/>
        <dbReference type="ChEBI" id="CHEBI:15378"/>
        <dbReference type="ChEBI" id="CHEBI:17509"/>
        <dbReference type="ChEBI" id="CHEBI:58360"/>
        <dbReference type="ChEBI" id="CHEBI:59789"/>
        <dbReference type="EC" id="4.4.1.14"/>
    </reaction>
</comment>
<comment type="cofactor">
    <cofactor>
        <name>pyridoxal 5'-phosphate</name>
        <dbReference type="ChEBI" id="CHEBI:597326"/>
    </cofactor>
</comment>
<comment type="biophysicochemical properties">
    <kinetics>
        <KM>15 uM for AdoMet</KM>
        <Vmax>31.2 uM/h/mg enzyme</Vmax>
    </kinetics>
    <phDependence>
        <text>Optimum pH is 7.8.</text>
    </phDependence>
</comment>
<comment type="pathway">
    <text>Alkene biosynthesis; ethylene biosynthesis via S-adenosyl-L-methionine; ethylene from S-adenosyl-L-methionine: step 1/2.</text>
</comment>
<comment type="subunit">
    <text evidence="1 3 4">Homodimer and heterodimer. In vivo, the relevance of heterodimerization with other ACS enzymes is however unsure (By similarity). Interacts with XBAT32. Interacts (via its C-terminal region) with ETO1 and EOL1.</text>
</comment>
<comment type="interaction">
    <interactant intactId="EBI-2436015">
        <id>Q43309</id>
    </interactant>
    <interactant intactId="EBI-2436015">
        <id>Q43309</id>
        <label>ACS4</label>
    </interactant>
    <organismsDiffer>false</organismsDiffer>
    <experiments>2</experiments>
</comment>
<comment type="interaction">
    <interactant intactId="EBI-2436015">
        <id>Q43309</id>
    </interactant>
    <interactant intactId="EBI-2356658">
        <id>Q9SAR0</id>
        <label>ACS6</label>
    </interactant>
    <organismsDiffer>false</organismsDiffer>
    <experiments>2</experiments>
</comment>
<comment type="interaction">
    <interactant intactId="EBI-2436015">
        <id>Q43309</id>
    </interactant>
    <interactant intactId="EBI-2356842">
        <id>Q9STR4</id>
        <label>ACS7</label>
    </interactant>
    <organismsDiffer>false</organismsDiffer>
    <experiments>4</experiments>
</comment>
<comment type="interaction">
    <interactant intactId="EBI-2436015">
        <id>Q43309</id>
    </interactant>
    <interactant intactId="EBI-2357693">
        <id>Q9T065</id>
        <label>ACS8</label>
    </interactant>
    <organismsDiffer>false</organismsDiffer>
    <experiments>2</experiments>
</comment>
<comment type="tissue specificity">
    <text evidence="5">Expressed in roots, leaves and flowers.</text>
</comment>
<comment type="induction">
    <text evidence="2 5">By indole-3-acetic acid (IAA) and cycloheximide (CHX). By auxin.</text>
</comment>
<comment type="PTM">
    <text evidence="4">Ubiquitinated by XBAT32. Ubiquitination probably leads to its subsequent degradation, thus controlling ethylene production.</text>
</comment>
<comment type="miscellaneous">
    <text>The stability of ACS proteins, and the regulation of such stability, play a central role in ethylene biosynthesis.</text>
</comment>
<comment type="similarity">
    <text evidence="6">Belongs to the class-I pyridoxal-phosphate-dependent aminotransferase family.</text>
</comment>
<accession>Q43309</accession>
<accession>Q9S9C4</accession>
<name>1A14_ARATH</name>
<keyword id="KW-0266">Ethylene biosynthesis</keyword>
<keyword id="KW-0292">Fruit ripening</keyword>
<keyword id="KW-0456">Lyase</keyword>
<keyword id="KW-0663">Pyridoxal phosphate</keyword>
<keyword id="KW-1185">Reference proteome</keyword>
<keyword id="KW-0949">S-adenosyl-L-methionine</keyword>
<keyword id="KW-0832">Ubl conjugation</keyword>
<sequence length="474" mass="53795">MVQLSRKATCNSHGQVSSYFLGWEEYEKNPYDVTKNPQGIIQMGLAENQLCFDLLESWLAQNTDAACFKRDGQSVFRELALFQDYHGLSSFKNAFADFMSENRGNRVSFDSNNLVLTAGATSANETLMFCLADPGDAFLLPTPYYPGFDRDLKWRTGVEIVPIQSSSTNGFRITKLALEEAYEQAKKLDLNVKGILITNPSNPLGTTTTQTELNILFDFITKNKNIHLVSDEIYSGTVFNSSEFISVMEILKNNQLENTDVLNRVHIVCSLSKDLGLPGFRVGAIYSNDKDVISAATKMSSFGLVSSQTQYLLSSLLSDKKFTKNYLRENQKRLKNRQRKLVLGLEAIGIKCLKSNAGLFCWVDMRPLLRSKTFEAEMDLWKKIVYEVKLNISPGSSCHCEEPGWFRVCFANMIDETLKLALKRLKMLVDDENSSRRCQKSKSERLNGSRKKTMSNVSNWVFRLSFHDREAEER</sequence>
<evidence type="ECO:0000250" key="1"/>
<evidence type="ECO:0000269" key="2">
    <source>
    </source>
</evidence>
<evidence type="ECO:0000269" key="3">
    <source>
    </source>
</evidence>
<evidence type="ECO:0000269" key="4">
    <source>
    </source>
</evidence>
<evidence type="ECO:0000269" key="5">
    <source>
    </source>
</evidence>
<evidence type="ECO:0000305" key="6"/>
<reference key="1">
    <citation type="journal article" date="1995" name="J. Biol. Chem.">
        <title>ACS4, a primary indoleacetic acid-responsive gene encoding 1-aminocyclopropane-1-carboxylate synthase in Arabidopsis thaliana. Structural characterization, expression in Escherichia coli, and expression characteristics in response to auxin.</title>
        <authorList>
            <person name="Abel S."/>
            <person name="Nguyen M.D."/>
            <person name="Chow W."/>
            <person name="Theologis A."/>
        </authorList>
    </citation>
    <scope>NUCLEOTIDE SEQUENCE [GENOMIC DNA / MRNA]</scope>
    <scope>TISSUE SPECIFICITY</scope>
    <scope>INDUCTION</scope>
    <source>
        <strain>cv. Columbia</strain>
    </source>
</reference>
<reference key="2">
    <citation type="journal article" date="1995" name="J. Biol. Chem.">
        <authorList>
            <person name="Abel S."/>
            <person name="Nguyen M.D."/>
            <person name="Chow W."/>
            <person name="Theologis A."/>
        </authorList>
    </citation>
    <scope>ERRATUM OF PUBMED:7642574</scope>
</reference>
<reference key="3">
    <citation type="journal article" date="1999" name="Nature">
        <title>Sequence and analysis of chromosome 2 of the plant Arabidopsis thaliana.</title>
        <authorList>
            <person name="Lin X."/>
            <person name="Kaul S."/>
            <person name="Rounsley S.D."/>
            <person name="Shea T.P."/>
            <person name="Benito M.-I."/>
            <person name="Town C.D."/>
            <person name="Fujii C.Y."/>
            <person name="Mason T.M."/>
            <person name="Bowman C.L."/>
            <person name="Barnstead M.E."/>
            <person name="Feldblyum T.V."/>
            <person name="Buell C.R."/>
            <person name="Ketchum K.A."/>
            <person name="Lee J.J."/>
            <person name="Ronning C.M."/>
            <person name="Koo H.L."/>
            <person name="Moffat K.S."/>
            <person name="Cronin L.A."/>
            <person name="Shen M."/>
            <person name="Pai G."/>
            <person name="Van Aken S."/>
            <person name="Umayam L."/>
            <person name="Tallon L.J."/>
            <person name="Gill J.E."/>
            <person name="Adams M.D."/>
            <person name="Carrera A.J."/>
            <person name="Creasy T.H."/>
            <person name="Goodman H.M."/>
            <person name="Somerville C.R."/>
            <person name="Copenhaver G.P."/>
            <person name="Preuss D."/>
            <person name="Nierman W.C."/>
            <person name="White O."/>
            <person name="Eisen J.A."/>
            <person name="Salzberg S.L."/>
            <person name="Fraser C.M."/>
            <person name="Venter J.C."/>
        </authorList>
    </citation>
    <scope>NUCLEOTIDE SEQUENCE [LARGE SCALE GENOMIC DNA]</scope>
    <source>
        <strain>cv. Columbia</strain>
    </source>
</reference>
<reference key="4">
    <citation type="journal article" date="2017" name="Plant J.">
        <title>Araport11: a complete reannotation of the Arabidopsis thaliana reference genome.</title>
        <authorList>
            <person name="Cheng C.Y."/>
            <person name="Krishnakumar V."/>
            <person name="Chan A.P."/>
            <person name="Thibaud-Nissen F."/>
            <person name="Schobel S."/>
            <person name="Town C.D."/>
        </authorList>
    </citation>
    <scope>GENOME REANNOTATION</scope>
    <source>
        <strain>cv. Columbia</strain>
    </source>
</reference>
<reference key="5">
    <citation type="journal article" date="2003" name="Science">
        <title>Empirical analysis of transcriptional activity in the Arabidopsis genome.</title>
        <authorList>
            <person name="Yamada K."/>
            <person name="Lim J."/>
            <person name="Dale J.M."/>
            <person name="Chen H."/>
            <person name="Shinn P."/>
            <person name="Palm C.J."/>
            <person name="Southwick A.M."/>
            <person name="Wu H.C."/>
            <person name="Kim C.J."/>
            <person name="Nguyen M."/>
            <person name="Pham P.K."/>
            <person name="Cheuk R.F."/>
            <person name="Karlin-Newmann G."/>
            <person name="Liu S.X."/>
            <person name="Lam B."/>
            <person name="Sakano H."/>
            <person name="Wu T."/>
            <person name="Yu G."/>
            <person name="Miranda M."/>
            <person name="Quach H.L."/>
            <person name="Tripp M."/>
            <person name="Chang C.H."/>
            <person name="Lee J.M."/>
            <person name="Toriumi M.J."/>
            <person name="Chan M.M."/>
            <person name="Tang C.C."/>
            <person name="Onodera C.S."/>
            <person name="Deng J.M."/>
            <person name="Akiyama K."/>
            <person name="Ansari Y."/>
            <person name="Arakawa T."/>
            <person name="Banh J."/>
            <person name="Banno F."/>
            <person name="Bowser L."/>
            <person name="Brooks S.Y."/>
            <person name="Carninci P."/>
            <person name="Chao Q."/>
            <person name="Choy N."/>
            <person name="Enju A."/>
            <person name="Goldsmith A.D."/>
            <person name="Gurjal M."/>
            <person name="Hansen N.F."/>
            <person name="Hayashizaki Y."/>
            <person name="Johnson-Hopson C."/>
            <person name="Hsuan V.W."/>
            <person name="Iida K."/>
            <person name="Karnes M."/>
            <person name="Khan S."/>
            <person name="Koesema E."/>
            <person name="Ishida J."/>
            <person name="Jiang P.X."/>
            <person name="Jones T."/>
            <person name="Kawai J."/>
            <person name="Kamiya A."/>
            <person name="Meyers C."/>
            <person name="Nakajima M."/>
            <person name="Narusaka M."/>
            <person name="Seki M."/>
            <person name="Sakurai T."/>
            <person name="Satou M."/>
            <person name="Tamse R."/>
            <person name="Vaysberg M."/>
            <person name="Wallender E.K."/>
            <person name="Wong C."/>
            <person name="Yamamura Y."/>
            <person name="Yuan S."/>
            <person name="Shinozaki K."/>
            <person name="Davis R.W."/>
            <person name="Theologis A."/>
            <person name="Ecker J.R."/>
        </authorList>
    </citation>
    <scope>NUCLEOTIDE SEQUENCE [LARGE SCALE MRNA]</scope>
    <source>
        <strain>cv. Columbia</strain>
    </source>
</reference>
<reference key="6">
    <citation type="journal article" date="1992" name="Proc. Natl. Acad. Sci. U.S.A.">
        <title>The 1-aminocyclopropane-1-carboxylate synthase gene family of Arabidopsis thaliana.</title>
        <authorList>
            <person name="Liang X.-W."/>
            <person name="Abel S."/>
            <person name="Keller J.A."/>
            <person name="Shen N.F."/>
            <person name="Theologis A."/>
        </authorList>
    </citation>
    <scope>NUCLEOTIDE SEQUENCE OF 50-81</scope>
</reference>
<reference key="7">
    <citation type="journal article" date="2003" name="J. Biol. Chem.">
        <title>Biochemical diversity among the 1-amino-cyclopropane-1-carboxylate synthase isozymes encoded by the Arabidopsis gene family.</title>
        <authorList>
            <person name="Yamagami T."/>
            <person name="Tsuchisaka A."/>
            <person name="Yamada K."/>
            <person name="Haddon W.F."/>
            <person name="Harden L.A."/>
            <person name="Theologis A."/>
        </authorList>
    </citation>
    <scope>ENZYME ACTIVITY</scope>
    <scope>INDUCTION</scope>
</reference>
<reference key="8">
    <citation type="journal article" date="2009" name="Plant J.">
        <title>The BTB ubiquitin ligases ETO1, EOL1 and EOL2 act collectively to regulate ethylene biosynthesis in Arabidopsis by controlling type-2 ACC synthase levels.</title>
        <authorList>
            <person name="Christians M.J."/>
            <person name="Gingerich D.J."/>
            <person name="Hansen M."/>
            <person name="Binder B.M."/>
            <person name="Kieber J.J."/>
            <person name="Vierstra R.D."/>
        </authorList>
    </citation>
    <scope>INTERACTION WITH ETO1 AND EOL1</scope>
</reference>
<reference key="9">
    <citation type="journal article" date="2010" name="Plant Physiol.">
        <title>Arabidopsis RING E3 ligase XBAT32 regulates lateral root production through its role in ethylene biosynthesis.</title>
        <authorList>
            <person name="Prasad M.E."/>
            <person name="Schofield A."/>
            <person name="Lyzenga W."/>
            <person name="Liu H."/>
            <person name="Stone S.L."/>
        </authorList>
    </citation>
    <scope>INTERACTION WITH XBAT32</scope>
    <scope>UBIQUITINATION</scope>
</reference>
<protein>
    <recommendedName>
        <fullName>1-aminocyclopropane-1-carboxylate synthase 4</fullName>
        <shortName>ACC synthase 4</shortName>
        <ecNumber>4.4.1.14</ecNumber>
    </recommendedName>
    <alternativeName>
        <fullName>S-adenosyl-L-methionine methylthioadenosine-lyase 4</fullName>
    </alternativeName>
</protein>
<dbReference type="EC" id="4.4.1.14"/>
<dbReference type="EMBL" id="U23481">
    <property type="protein sequence ID" value="AAC49037.1"/>
    <property type="molecule type" value="mRNA"/>
</dbReference>
<dbReference type="EMBL" id="U23482">
    <property type="protein sequence ID" value="AAA85039.1"/>
    <property type="molecule type" value="Genomic_DNA"/>
</dbReference>
<dbReference type="EMBL" id="AC004786">
    <property type="protein sequence ID" value="AAC32428.1"/>
    <property type="molecule type" value="Genomic_DNA"/>
</dbReference>
<dbReference type="EMBL" id="AC005617">
    <property type="protein sequence ID" value="AAM15065.1"/>
    <property type="molecule type" value="Genomic_DNA"/>
</dbReference>
<dbReference type="EMBL" id="CP002685">
    <property type="protein sequence ID" value="AEC07360.1"/>
    <property type="molecule type" value="Genomic_DNA"/>
</dbReference>
<dbReference type="EMBL" id="AF332404">
    <property type="protein sequence ID" value="AAG48767.1"/>
    <property type="molecule type" value="mRNA"/>
</dbReference>
<dbReference type="PIR" id="B84617">
    <property type="entry name" value="B84617"/>
</dbReference>
<dbReference type="PIR" id="G46376">
    <property type="entry name" value="G46376"/>
</dbReference>
<dbReference type="RefSeq" id="NP_179866.1">
    <property type="nucleotide sequence ID" value="NM_127846.2"/>
</dbReference>
<dbReference type="SMR" id="Q43309"/>
<dbReference type="BioGRID" id="2165">
    <property type="interactions" value="2"/>
</dbReference>
<dbReference type="FunCoup" id="Q43309">
    <property type="interactions" value="274"/>
</dbReference>
<dbReference type="IntAct" id="Q43309">
    <property type="interactions" value="5"/>
</dbReference>
<dbReference type="STRING" id="3702.Q43309"/>
<dbReference type="PaxDb" id="3702-AT2G22810.1"/>
<dbReference type="EnsemblPlants" id="AT2G22810.1">
    <property type="protein sequence ID" value="AT2G22810.1"/>
    <property type="gene ID" value="AT2G22810"/>
</dbReference>
<dbReference type="GeneID" id="816812"/>
<dbReference type="Gramene" id="AT2G22810.1">
    <property type="protein sequence ID" value="AT2G22810.1"/>
    <property type="gene ID" value="AT2G22810"/>
</dbReference>
<dbReference type="KEGG" id="ath:AT2G22810"/>
<dbReference type="Araport" id="AT2G22810"/>
<dbReference type="TAIR" id="AT2G22810">
    <property type="gene designation" value="ACS4"/>
</dbReference>
<dbReference type="eggNOG" id="KOG0256">
    <property type="taxonomic scope" value="Eukaryota"/>
</dbReference>
<dbReference type="HOGENOM" id="CLU_017584_1_0_1"/>
<dbReference type="InParanoid" id="Q43309"/>
<dbReference type="OMA" id="WIFRLSF"/>
<dbReference type="PhylomeDB" id="Q43309"/>
<dbReference type="BioCyc" id="ARA:AT2G22810-MONOMER"/>
<dbReference type="BioCyc" id="MetaCyc:AT2G22810-MONOMER"/>
<dbReference type="SABIO-RK" id="Q43309"/>
<dbReference type="UniPathway" id="UPA00384">
    <property type="reaction ID" value="UER00562"/>
</dbReference>
<dbReference type="PRO" id="PR:Q43309"/>
<dbReference type="Proteomes" id="UP000006548">
    <property type="component" value="Chromosome 2"/>
</dbReference>
<dbReference type="ExpressionAtlas" id="Q43309">
    <property type="expression patterns" value="baseline and differential"/>
</dbReference>
<dbReference type="GO" id="GO:0016847">
    <property type="term" value="F:1-aminocyclopropane-1-carboxylate synthase activity"/>
    <property type="evidence" value="ECO:0000314"/>
    <property type="project" value="TAIR"/>
</dbReference>
<dbReference type="GO" id="GO:0042802">
    <property type="term" value="F:identical protein binding"/>
    <property type="evidence" value="ECO:0000353"/>
    <property type="project" value="IntAct"/>
</dbReference>
<dbReference type="GO" id="GO:0030170">
    <property type="term" value="F:pyridoxal phosphate binding"/>
    <property type="evidence" value="ECO:0007669"/>
    <property type="project" value="InterPro"/>
</dbReference>
<dbReference type="GO" id="GO:0009693">
    <property type="term" value="P:ethylene biosynthetic process"/>
    <property type="evidence" value="ECO:0007669"/>
    <property type="project" value="UniProtKB-UniPathway"/>
</dbReference>
<dbReference type="GO" id="GO:0009835">
    <property type="term" value="P:fruit ripening"/>
    <property type="evidence" value="ECO:0007669"/>
    <property type="project" value="UniProtKB-KW"/>
</dbReference>
<dbReference type="CDD" id="cd00609">
    <property type="entry name" value="AAT_like"/>
    <property type="match status" value="1"/>
</dbReference>
<dbReference type="FunFam" id="3.90.1150.10:FF:000038">
    <property type="entry name" value="1-aminocyclopropane-1-carboxylate synthase 2"/>
    <property type="match status" value="1"/>
</dbReference>
<dbReference type="FunFam" id="3.40.640.10:FF:000051">
    <property type="entry name" value="1-aminocyclopropane-1-carboxylate synthase 3"/>
    <property type="match status" value="1"/>
</dbReference>
<dbReference type="Gene3D" id="3.90.1150.10">
    <property type="entry name" value="Aspartate Aminotransferase, domain 1"/>
    <property type="match status" value="1"/>
</dbReference>
<dbReference type="Gene3D" id="3.40.640.10">
    <property type="entry name" value="Type I PLP-dependent aspartate aminotransferase-like (Major domain)"/>
    <property type="match status" value="1"/>
</dbReference>
<dbReference type="InterPro" id="IPR004839">
    <property type="entry name" value="Aminotransferase_I/II_large"/>
</dbReference>
<dbReference type="InterPro" id="IPR050478">
    <property type="entry name" value="Ethylene_sulfur-biosynth"/>
</dbReference>
<dbReference type="InterPro" id="IPR004838">
    <property type="entry name" value="NHTrfase_class1_PyrdxlP-BS"/>
</dbReference>
<dbReference type="InterPro" id="IPR015424">
    <property type="entry name" value="PyrdxlP-dep_Trfase"/>
</dbReference>
<dbReference type="InterPro" id="IPR015421">
    <property type="entry name" value="PyrdxlP-dep_Trfase_major"/>
</dbReference>
<dbReference type="InterPro" id="IPR015422">
    <property type="entry name" value="PyrdxlP-dep_Trfase_small"/>
</dbReference>
<dbReference type="PANTHER" id="PTHR43795:SF67">
    <property type="entry name" value="1-AMINOCYCLOPROPANE-1-CARBOXYLATE SYNTHASE 4"/>
    <property type="match status" value="1"/>
</dbReference>
<dbReference type="PANTHER" id="PTHR43795">
    <property type="entry name" value="BIFUNCTIONAL ASPARTATE AMINOTRANSFERASE AND GLUTAMATE/ASPARTATE-PREPHENATE AMINOTRANSFERASE-RELATED"/>
    <property type="match status" value="1"/>
</dbReference>
<dbReference type="Pfam" id="PF00155">
    <property type="entry name" value="Aminotran_1_2"/>
    <property type="match status" value="1"/>
</dbReference>
<dbReference type="PRINTS" id="PR00753">
    <property type="entry name" value="ACCSYNTHASE"/>
</dbReference>
<dbReference type="SUPFAM" id="SSF53383">
    <property type="entry name" value="PLP-dependent transferases"/>
    <property type="match status" value="1"/>
</dbReference>
<dbReference type="PROSITE" id="PS00105">
    <property type="entry name" value="AA_TRANSFER_CLASS_1"/>
    <property type="match status" value="1"/>
</dbReference>
<proteinExistence type="evidence at protein level"/>
<gene>
    <name type="primary">ACS4</name>
    <name type="synonym">ACC4</name>
    <name type="ordered locus">At2g22810</name>
    <name type="ORF">T20K9.2</name>
</gene>
<feature type="chain" id="PRO_0000123898" description="1-aminocyclopropane-1-carboxylate synthase 4">
    <location>
        <begin position="1"/>
        <end position="474"/>
    </location>
</feature>
<feature type="binding site" evidence="1">
    <location>
        <position position="47"/>
    </location>
    <ligand>
        <name>substrate</name>
    </ligand>
</feature>
<feature type="binding site" evidence="1">
    <location>
        <position position="85"/>
    </location>
    <ligand>
        <name>substrate</name>
    </ligand>
</feature>
<feature type="modified residue" description="N6-(pyridoxal phosphate)lysine" evidence="1">
    <location>
        <position position="273"/>
    </location>
</feature>